<keyword id="KW-1015">Disulfide bond</keyword>
<keyword id="KW-0238">DNA-binding</keyword>
<keyword id="KW-0539">Nucleus</keyword>
<keyword id="KW-0597">Phosphoprotein</keyword>
<keyword id="KW-1185">Reference proteome</keyword>
<keyword id="KW-0804">Transcription</keyword>
<keyword id="KW-0805">Transcription regulation</keyword>
<protein>
    <recommendedName>
        <fullName evidence="6">Transcription factor JunD</fullName>
    </recommendedName>
    <alternativeName>
        <fullName evidence="6">Transcription factor AP-1 subunit JunD</fullName>
    </alternativeName>
</protein>
<proteinExistence type="evidence at protein level"/>
<feature type="chain" id="PRO_0000076444" description="Transcription factor JunD">
    <location>
        <begin position="1"/>
        <end position="341"/>
    </location>
</feature>
<feature type="domain" description="bZIP" evidence="4">
    <location>
        <begin position="262"/>
        <end position="325"/>
    </location>
</feature>
<feature type="region of interest" description="Disordered" evidence="5">
    <location>
        <begin position="21"/>
        <end position="49"/>
    </location>
</feature>
<feature type="region of interest" description="Disordered" evidence="5">
    <location>
        <begin position="65"/>
        <end position="85"/>
    </location>
</feature>
<feature type="region of interest" description="Disordered" evidence="5">
    <location>
        <begin position="155"/>
        <end position="176"/>
    </location>
</feature>
<feature type="region of interest" description="Basic motif" evidence="4">
    <location>
        <begin position="262"/>
        <end position="289"/>
    </location>
</feature>
<feature type="region of interest" description="Leucine-zipper" evidence="4">
    <location>
        <begin position="290"/>
        <end position="318"/>
    </location>
</feature>
<feature type="short sequence motif" description="Menin-binding motif (MBM)" evidence="3">
    <location>
        <begin position="35"/>
        <end position="47"/>
    </location>
</feature>
<feature type="short sequence motif" description="MAP kinase docking motif; essential for its phosphorylation" evidence="3">
    <location>
        <begin position="51"/>
        <end position="60"/>
    </location>
</feature>
<feature type="modified residue" description="Phosphoserine" evidence="3">
    <location>
        <position position="90"/>
    </location>
</feature>
<feature type="modified residue" description="Phosphoserine; by MAPK8" evidence="3">
    <location>
        <position position="100"/>
    </location>
</feature>
<feature type="modified residue" description="Phosphothreonine" evidence="3">
    <location>
        <position position="117"/>
    </location>
</feature>
<feature type="modified residue" description="Phosphoserine" evidence="3">
    <location>
        <position position="245"/>
    </location>
</feature>
<feature type="modified residue" description="Phosphoserine" evidence="7">
    <location>
        <position position="249"/>
    </location>
</feature>
<feature type="modified residue" description="Phosphoserine" evidence="7">
    <location>
        <position position="253"/>
    </location>
</feature>
<feature type="disulfide bond" description="Interchain (with C-172 in FOSB)" evidence="3">
    <location>
        <position position="279"/>
    </location>
</feature>
<comment type="function">
    <text evidence="3">Transcription factor binding AP-1 sites (By similarity). Heterodimerizes with proteins of the FOS family to form an AP-1 transcription factor complex, thereby enhancing their DNA binding activity to an AP-1 consensus sequence 3'-TGA[GC]TCA-5' and enhancing their transcriptional activity (By similarity).</text>
</comment>
<comment type="subunit">
    <text evidence="1 2 3">Heterodimer; binds DNA as a heterodimer (By similarity). Component of an AP-1 transcription factor complex composed of JUN-FOS heterodimers (By similarity). As part of the AP-1 transcription factor complex, forms heterodimers with FOS proteins, thereby binding to the AP-1 consensus sequence and stimulating transcription (By similarity). Forms heterodimers with FOSB; thereby binding to the AP-1 consensus sequence (By similarity). Interacts (via MBM motif) with MEN1; this interaction represses transcriptional activation (By similarity). Interacts with MAPK10; this interaction is inhibited in the presence of MEN1 (By similarity).</text>
</comment>
<comment type="subcellular location">
    <subcellularLocation>
        <location>Nucleus</location>
    </subcellularLocation>
</comment>
<comment type="domain">
    <text evidence="3">Binds DNA via bZIP domain; DNA-binding is under control of cellular redox homeostasis (in vitro) (By similarity). To enable DNA binding, the bZIP domain must undergo a conformational rearrangement which requires the reduction of the interchain disulfide bond between FosB and JunD (in vitro) (By similarity).</text>
</comment>
<comment type="PTM">
    <text evidence="3">Phosphorylated by MAP kinases MAPK8 and MAPK10; phosphorylation is inhibited in the presence of MEN1.</text>
</comment>
<comment type="similarity">
    <text evidence="6">Belongs to the bZIP family. Jun subfamily.</text>
</comment>
<accession>P52909</accession>
<sequence length="341" mass="34875">METPFYGEEALSGLAAGASSVAGAAGAPGGGGFAPPGRAFPGAPPTSSMLKKDALTLSLAEQGAAGLKPGSATAPSALRPDGAPDGLLASPDLGLLKLASPELERLIIQSNGLVTTTPTSTQFLYPKVAASEEQEFAEGFVKALEDLHKQSQLGAATAATSGAPAPPAPADLAATPGATETPVYANLSSFAGGAGPPGGAATVAFAAEPVPFPPPPGALGPPPPPHPPRLAALKDEPQTVPDVPSFGDSPPLSPIDMDTQERIKAERKRLRNRIAASKCRKRKLERISRLEEKVKTLKSQNTELASTASLLREQVAQLKQKVLSHVNSGCQLLPQHQVPAY</sequence>
<gene>
    <name type="primary">Jund</name>
    <name type="synonym">Jun-d</name>
</gene>
<organism>
    <name type="scientific">Rattus norvegicus</name>
    <name type="common">Rat</name>
    <dbReference type="NCBI Taxonomy" id="10116"/>
    <lineage>
        <taxon>Eukaryota</taxon>
        <taxon>Metazoa</taxon>
        <taxon>Chordata</taxon>
        <taxon>Craniata</taxon>
        <taxon>Vertebrata</taxon>
        <taxon>Euteleostomi</taxon>
        <taxon>Mammalia</taxon>
        <taxon>Eutheria</taxon>
        <taxon>Euarchontoglires</taxon>
        <taxon>Glires</taxon>
        <taxon>Rodentia</taxon>
        <taxon>Myomorpha</taxon>
        <taxon>Muroidea</taxon>
        <taxon>Muridae</taxon>
        <taxon>Murinae</taxon>
        <taxon>Rattus</taxon>
    </lineage>
</organism>
<dbReference type="EMBL" id="D26307">
    <property type="protein sequence ID" value="BAA05369.1"/>
    <property type="molecule type" value="Genomic_DNA"/>
</dbReference>
<dbReference type="EMBL" id="BC062053">
    <property type="protein sequence ID" value="AAH62053.1"/>
    <property type="molecule type" value="mRNA"/>
</dbReference>
<dbReference type="PIR" id="JC4051">
    <property type="entry name" value="JC4051"/>
</dbReference>
<dbReference type="RefSeq" id="NP_001273895.1">
    <property type="nucleotide sequence ID" value="NM_001286966.1"/>
</dbReference>
<dbReference type="RefSeq" id="NP_620230.1">
    <property type="nucleotide sequence ID" value="NM_138875.5"/>
</dbReference>
<dbReference type="SMR" id="P52909"/>
<dbReference type="BioGRID" id="246673">
    <property type="interactions" value="1"/>
</dbReference>
<dbReference type="FunCoup" id="P52909">
    <property type="interactions" value="1074"/>
</dbReference>
<dbReference type="STRING" id="10116.ENSRNOP00000026470"/>
<dbReference type="GlyGen" id="P52909">
    <property type="glycosylation" value="1 site"/>
</dbReference>
<dbReference type="iPTMnet" id="P52909"/>
<dbReference type="PhosphoSitePlus" id="P52909"/>
<dbReference type="PaxDb" id="10116-ENSRNOP00000026470"/>
<dbReference type="GeneID" id="24518"/>
<dbReference type="KEGG" id="rno:24518"/>
<dbReference type="UCSC" id="RGD:2945">
    <property type="organism name" value="rat"/>
</dbReference>
<dbReference type="AGR" id="RGD:2945"/>
<dbReference type="CTD" id="3727"/>
<dbReference type="RGD" id="2945">
    <property type="gene designation" value="Jund"/>
</dbReference>
<dbReference type="VEuPathDB" id="HostDB:ENSRNOG00000019568"/>
<dbReference type="eggNOG" id="KOG0837">
    <property type="taxonomic scope" value="Eukaryota"/>
</dbReference>
<dbReference type="HOGENOM" id="CLU_057007_0_0_1"/>
<dbReference type="InParanoid" id="P52909"/>
<dbReference type="OrthoDB" id="2187714at2759"/>
<dbReference type="PhylomeDB" id="P52909"/>
<dbReference type="PRO" id="PR:P52909"/>
<dbReference type="Proteomes" id="UP000002494">
    <property type="component" value="Chromosome 16"/>
</dbReference>
<dbReference type="Bgee" id="ENSRNOG00000019568">
    <property type="expression patterns" value="Expressed in thymus and 19 other cell types or tissues"/>
</dbReference>
<dbReference type="GO" id="GO:0005654">
    <property type="term" value="C:nucleoplasm"/>
    <property type="evidence" value="ECO:0000304"/>
    <property type="project" value="Reactome"/>
</dbReference>
<dbReference type="GO" id="GO:0005634">
    <property type="term" value="C:nucleus"/>
    <property type="evidence" value="ECO:0000314"/>
    <property type="project" value="ParkinsonsUK-UCL"/>
</dbReference>
<dbReference type="GO" id="GO:0032991">
    <property type="term" value="C:protein-containing complex"/>
    <property type="evidence" value="ECO:0000314"/>
    <property type="project" value="RGD"/>
</dbReference>
<dbReference type="GO" id="GO:0032993">
    <property type="term" value="C:protein-DNA complex"/>
    <property type="evidence" value="ECO:0000314"/>
    <property type="project" value="ParkinsonsUK-UCL"/>
</dbReference>
<dbReference type="GO" id="GO:0090575">
    <property type="term" value="C:RNA polymerase II transcription regulator complex"/>
    <property type="evidence" value="ECO:0000266"/>
    <property type="project" value="RGD"/>
</dbReference>
<dbReference type="GO" id="GO:0035976">
    <property type="term" value="C:transcription factor AP-1 complex"/>
    <property type="evidence" value="ECO:0000266"/>
    <property type="project" value="RGD"/>
</dbReference>
<dbReference type="GO" id="GO:0005667">
    <property type="term" value="C:transcription regulator complex"/>
    <property type="evidence" value="ECO:0000318"/>
    <property type="project" value="GO_Central"/>
</dbReference>
<dbReference type="GO" id="GO:0017053">
    <property type="term" value="C:transcription repressor complex"/>
    <property type="evidence" value="ECO:0000266"/>
    <property type="project" value="RGD"/>
</dbReference>
<dbReference type="GO" id="GO:0003677">
    <property type="term" value="F:DNA binding"/>
    <property type="evidence" value="ECO:0000266"/>
    <property type="project" value="RGD"/>
</dbReference>
<dbReference type="GO" id="GO:0001228">
    <property type="term" value="F:DNA-binding transcription activator activity, RNA polymerase II-specific"/>
    <property type="evidence" value="ECO:0000314"/>
    <property type="project" value="ParkinsonsUK-UCL"/>
</dbReference>
<dbReference type="GO" id="GO:0003700">
    <property type="term" value="F:DNA-binding transcription factor activity"/>
    <property type="evidence" value="ECO:0000314"/>
    <property type="project" value="RGD"/>
</dbReference>
<dbReference type="GO" id="GO:0000981">
    <property type="term" value="F:DNA-binding transcription factor activity, RNA polymerase II-specific"/>
    <property type="evidence" value="ECO:0000318"/>
    <property type="project" value="GO_Central"/>
</dbReference>
<dbReference type="GO" id="GO:0003690">
    <property type="term" value="F:double-stranded DNA binding"/>
    <property type="evidence" value="ECO:0000314"/>
    <property type="project" value="RGD"/>
</dbReference>
<dbReference type="GO" id="GO:0019899">
    <property type="term" value="F:enzyme binding"/>
    <property type="evidence" value="ECO:0000266"/>
    <property type="project" value="RGD"/>
</dbReference>
<dbReference type="GO" id="GO:0016922">
    <property type="term" value="F:nuclear receptor binding"/>
    <property type="evidence" value="ECO:0000353"/>
    <property type="project" value="RGD"/>
</dbReference>
<dbReference type="GO" id="GO:0000978">
    <property type="term" value="F:RNA polymerase II cis-regulatory region sequence-specific DNA binding"/>
    <property type="evidence" value="ECO:0000266"/>
    <property type="project" value="RGD"/>
</dbReference>
<dbReference type="GO" id="GO:0043565">
    <property type="term" value="F:sequence-specific DNA binding"/>
    <property type="evidence" value="ECO:0000314"/>
    <property type="project" value="RGD"/>
</dbReference>
<dbReference type="GO" id="GO:1990837">
    <property type="term" value="F:sequence-specific double-stranded DNA binding"/>
    <property type="evidence" value="ECO:0000266"/>
    <property type="project" value="RGD"/>
</dbReference>
<dbReference type="GO" id="GO:0000976">
    <property type="term" value="F:transcription cis-regulatory region binding"/>
    <property type="evidence" value="ECO:0000314"/>
    <property type="project" value="ParkinsonsUK-UCL"/>
</dbReference>
<dbReference type="GO" id="GO:0003713">
    <property type="term" value="F:transcription coactivator activity"/>
    <property type="evidence" value="ECO:0000314"/>
    <property type="project" value="RGD"/>
</dbReference>
<dbReference type="GO" id="GO:0001221">
    <property type="term" value="F:transcription coregulator binding"/>
    <property type="evidence" value="ECO:0000266"/>
    <property type="project" value="RGD"/>
</dbReference>
<dbReference type="GO" id="GO:0071277">
    <property type="term" value="P:cellular response to calcium ion"/>
    <property type="evidence" value="ECO:0000266"/>
    <property type="project" value="RGD"/>
</dbReference>
<dbReference type="GO" id="GO:0071398">
    <property type="term" value="P:cellular response to fatty acid"/>
    <property type="evidence" value="ECO:0000270"/>
    <property type="project" value="RGD"/>
</dbReference>
<dbReference type="GO" id="GO:0071456">
    <property type="term" value="P:cellular response to hypoxia"/>
    <property type="evidence" value="ECO:0000270"/>
    <property type="project" value="RGD"/>
</dbReference>
<dbReference type="GO" id="GO:0007623">
    <property type="term" value="P:circadian rhythm"/>
    <property type="evidence" value="ECO:0000270"/>
    <property type="project" value="RGD"/>
</dbReference>
<dbReference type="GO" id="GO:0010467">
    <property type="term" value="P:gene expression"/>
    <property type="evidence" value="ECO:0000266"/>
    <property type="project" value="RGD"/>
</dbReference>
<dbReference type="GO" id="GO:0000122">
    <property type="term" value="P:negative regulation of transcription by RNA polymerase II"/>
    <property type="evidence" value="ECO:0000266"/>
    <property type="project" value="RGD"/>
</dbReference>
<dbReference type="GO" id="GO:0002076">
    <property type="term" value="P:osteoblast development"/>
    <property type="evidence" value="ECO:0000266"/>
    <property type="project" value="RGD"/>
</dbReference>
<dbReference type="GO" id="GO:0043032">
    <property type="term" value="P:positive regulation of macrophage activation"/>
    <property type="evidence" value="ECO:0000315"/>
    <property type="project" value="RGD"/>
</dbReference>
<dbReference type="GO" id="GO:0045669">
    <property type="term" value="P:positive regulation of osteoblast differentiation"/>
    <property type="evidence" value="ECO:0000266"/>
    <property type="project" value="RGD"/>
</dbReference>
<dbReference type="GO" id="GO:0035360">
    <property type="term" value="P:positive regulation of peroxisome proliferator activated receptor signaling pathway"/>
    <property type="evidence" value="ECO:0000315"/>
    <property type="project" value="RGD"/>
</dbReference>
<dbReference type="GO" id="GO:0045944">
    <property type="term" value="P:positive regulation of transcription by RNA polymerase II"/>
    <property type="evidence" value="ECO:0000266"/>
    <property type="project" value="RGD"/>
</dbReference>
<dbReference type="GO" id="GO:0051726">
    <property type="term" value="P:regulation of cell cycle"/>
    <property type="evidence" value="ECO:0000318"/>
    <property type="project" value="GO_Central"/>
</dbReference>
<dbReference type="GO" id="GO:0042127">
    <property type="term" value="P:regulation of cell population proliferation"/>
    <property type="evidence" value="ECO:0000318"/>
    <property type="project" value="GO_Central"/>
</dbReference>
<dbReference type="GO" id="GO:0006355">
    <property type="term" value="P:regulation of DNA-templated transcription"/>
    <property type="evidence" value="ECO:0000314"/>
    <property type="project" value="RGD"/>
</dbReference>
<dbReference type="GO" id="GO:1904321">
    <property type="term" value="P:response to forskolin"/>
    <property type="evidence" value="ECO:0000270"/>
    <property type="project" value="RGD"/>
</dbReference>
<dbReference type="GO" id="GO:0009416">
    <property type="term" value="P:response to light stimulus"/>
    <property type="evidence" value="ECO:0000270"/>
    <property type="project" value="RGD"/>
</dbReference>
<dbReference type="GO" id="GO:0032496">
    <property type="term" value="P:response to lipopolysaccharide"/>
    <property type="evidence" value="ECO:0000270"/>
    <property type="project" value="RGD"/>
</dbReference>
<dbReference type="GO" id="GO:0009612">
    <property type="term" value="P:response to mechanical stimulus"/>
    <property type="evidence" value="ECO:0000270"/>
    <property type="project" value="RGD"/>
</dbReference>
<dbReference type="GO" id="GO:0043434">
    <property type="term" value="P:response to peptide hormone"/>
    <property type="evidence" value="ECO:0000270"/>
    <property type="project" value="RGD"/>
</dbReference>
<dbReference type="GO" id="GO:0048545">
    <property type="term" value="P:response to steroid hormone"/>
    <property type="evidence" value="ECO:0000318"/>
    <property type="project" value="GO_Central"/>
</dbReference>
<dbReference type="GO" id="GO:0006366">
    <property type="term" value="P:transcription by RNA polymerase II"/>
    <property type="evidence" value="ECO:0000315"/>
    <property type="project" value="RGD"/>
</dbReference>
<dbReference type="CDD" id="cd14696">
    <property type="entry name" value="bZIP_Jun"/>
    <property type="match status" value="1"/>
</dbReference>
<dbReference type="FunFam" id="1.20.5.170:FF:000012">
    <property type="entry name" value="Putative transcription factor AP-1"/>
    <property type="match status" value="1"/>
</dbReference>
<dbReference type="Gene3D" id="1.20.5.170">
    <property type="match status" value="1"/>
</dbReference>
<dbReference type="InterPro" id="IPR050946">
    <property type="entry name" value="AP-1_TF_bZIP"/>
</dbReference>
<dbReference type="InterPro" id="IPR004827">
    <property type="entry name" value="bZIP"/>
</dbReference>
<dbReference type="InterPro" id="IPR046347">
    <property type="entry name" value="bZIP_sf"/>
</dbReference>
<dbReference type="InterPro" id="IPR005643">
    <property type="entry name" value="JNK"/>
</dbReference>
<dbReference type="InterPro" id="IPR002112">
    <property type="entry name" value="Leuzip_Jun"/>
</dbReference>
<dbReference type="InterPro" id="IPR008917">
    <property type="entry name" value="TF_DNA-bd_sf"/>
</dbReference>
<dbReference type="PANTHER" id="PTHR11462">
    <property type="entry name" value="JUN TRANSCRIPTION FACTOR-RELATED"/>
    <property type="match status" value="1"/>
</dbReference>
<dbReference type="PANTHER" id="PTHR11462:SF7">
    <property type="entry name" value="TRANSCRIPTION FACTOR JUND"/>
    <property type="match status" value="1"/>
</dbReference>
<dbReference type="Pfam" id="PF00170">
    <property type="entry name" value="bZIP_1"/>
    <property type="match status" value="1"/>
</dbReference>
<dbReference type="Pfam" id="PF03957">
    <property type="entry name" value="Jun"/>
    <property type="match status" value="1"/>
</dbReference>
<dbReference type="PRINTS" id="PR00043">
    <property type="entry name" value="LEUZIPPRJUN"/>
</dbReference>
<dbReference type="SMART" id="SM00338">
    <property type="entry name" value="BRLZ"/>
    <property type="match status" value="1"/>
</dbReference>
<dbReference type="SUPFAM" id="SSF47454">
    <property type="entry name" value="A DNA-binding domain in eukaryotic transcription factors"/>
    <property type="match status" value="1"/>
</dbReference>
<dbReference type="SUPFAM" id="SSF57959">
    <property type="entry name" value="Leucine zipper domain"/>
    <property type="match status" value="1"/>
</dbReference>
<dbReference type="PROSITE" id="PS50217">
    <property type="entry name" value="BZIP"/>
    <property type="match status" value="1"/>
</dbReference>
<dbReference type="PROSITE" id="PS00036">
    <property type="entry name" value="BZIP_BASIC"/>
    <property type="match status" value="1"/>
</dbReference>
<reference key="1">
    <citation type="journal article" date="1995" name="Gene">
        <title>Sequence analysis of the rat jun-D gene.</title>
        <authorList>
            <person name="Yamada T."/>
            <person name="Nakao S."/>
            <person name="Osada S."/>
            <person name="Imagawa M."/>
            <person name="Nishihara T."/>
        </authorList>
    </citation>
    <scope>NUCLEOTIDE SEQUENCE [GENOMIC DNA]</scope>
    <source>
        <strain>Sprague-Dawley</strain>
        <tissue>Liver</tissue>
    </source>
</reference>
<reference key="2">
    <citation type="journal article" date="2004" name="Genome Res.">
        <title>The status, quality, and expansion of the NIH full-length cDNA project: the Mammalian Gene Collection (MGC).</title>
        <authorList>
            <consortium name="The MGC Project Team"/>
        </authorList>
    </citation>
    <scope>NUCLEOTIDE SEQUENCE [LARGE SCALE MRNA]</scope>
    <source>
        <tissue>Prostate</tissue>
    </source>
</reference>
<reference key="3">
    <citation type="journal article" date="2012" name="Nat. Commun.">
        <title>Quantitative maps of protein phosphorylation sites across 14 different rat organs and tissues.</title>
        <authorList>
            <person name="Lundby A."/>
            <person name="Secher A."/>
            <person name="Lage K."/>
            <person name="Nordsborg N.B."/>
            <person name="Dmytriyev A."/>
            <person name="Lundby C."/>
            <person name="Olsen J.V."/>
        </authorList>
    </citation>
    <scope>PHOSPHORYLATION [LARGE SCALE ANALYSIS] AT SER-249 AND SER-253</scope>
    <scope>IDENTIFICATION BY MASS SPECTROMETRY [LARGE SCALE ANALYSIS]</scope>
</reference>
<evidence type="ECO:0000250" key="1"/>
<evidence type="ECO:0000250" key="2">
    <source>
        <dbReference type="UniProtKB" id="P13346"/>
    </source>
</evidence>
<evidence type="ECO:0000250" key="3">
    <source>
        <dbReference type="UniProtKB" id="P17535"/>
    </source>
</evidence>
<evidence type="ECO:0000255" key="4">
    <source>
        <dbReference type="PROSITE-ProRule" id="PRU00978"/>
    </source>
</evidence>
<evidence type="ECO:0000256" key="5">
    <source>
        <dbReference type="SAM" id="MobiDB-lite"/>
    </source>
</evidence>
<evidence type="ECO:0000305" key="6"/>
<evidence type="ECO:0007744" key="7">
    <source>
    </source>
</evidence>
<name>JUND_RAT</name>